<evidence type="ECO:0000255" key="1">
    <source>
        <dbReference type="HAMAP-Rule" id="MF_01577"/>
    </source>
</evidence>
<feature type="chain" id="PRO_0000268602" description="Putative multidrug resistance protein MdtD">
    <location>
        <begin position="1"/>
        <end position="471"/>
    </location>
</feature>
<feature type="topological domain" description="Periplasmic" evidence="1">
    <location>
        <begin position="1"/>
        <end position="11"/>
    </location>
</feature>
<feature type="transmembrane region" description="Helical" evidence="1">
    <location>
        <begin position="12"/>
        <end position="32"/>
    </location>
</feature>
<feature type="topological domain" description="Cytoplasmic" evidence="1">
    <location>
        <begin position="33"/>
        <end position="48"/>
    </location>
</feature>
<feature type="transmembrane region" description="Helical" evidence="1">
    <location>
        <begin position="49"/>
        <end position="69"/>
    </location>
</feature>
<feature type="topological domain" description="Periplasmic" evidence="1">
    <location>
        <begin position="70"/>
        <end position="76"/>
    </location>
</feature>
<feature type="transmembrane region" description="Helical" evidence="1">
    <location>
        <begin position="77"/>
        <end position="97"/>
    </location>
</feature>
<feature type="topological domain" description="Cytoplasmic" evidence="1">
    <location>
        <begin position="98"/>
        <end position="101"/>
    </location>
</feature>
<feature type="transmembrane region" description="Helical" evidence="1">
    <location>
        <begin position="102"/>
        <end position="124"/>
    </location>
</feature>
<feature type="topological domain" description="Periplasmic" evidence="1">
    <location>
        <begin position="125"/>
        <end position="137"/>
    </location>
</feature>
<feature type="transmembrane region" description="Helical" evidence="1">
    <location>
        <begin position="138"/>
        <end position="158"/>
    </location>
</feature>
<feature type="topological domain" description="Cytoplasmic" evidence="1">
    <location>
        <begin position="159"/>
        <end position="164"/>
    </location>
</feature>
<feature type="transmembrane region" description="Helical" evidence="1">
    <location>
        <begin position="165"/>
        <end position="185"/>
    </location>
</feature>
<feature type="topological domain" description="Periplasmic" evidence="1">
    <location>
        <begin position="186"/>
        <end position="196"/>
    </location>
</feature>
<feature type="transmembrane region" description="Helical" evidence="1">
    <location>
        <begin position="197"/>
        <end position="217"/>
    </location>
</feature>
<feature type="topological domain" description="Cytoplasmic" evidence="1">
    <location>
        <begin position="218"/>
        <end position="224"/>
    </location>
</feature>
<feature type="transmembrane region" description="Helical" evidence="1">
    <location>
        <begin position="225"/>
        <end position="245"/>
    </location>
</feature>
<feature type="topological domain" description="Periplasmic" evidence="1">
    <location>
        <begin position="246"/>
        <end position="262"/>
    </location>
</feature>
<feature type="transmembrane region" description="Helical" evidence="1">
    <location>
        <begin position="263"/>
        <end position="283"/>
    </location>
</feature>
<feature type="topological domain" description="Cytoplasmic" evidence="1">
    <location>
        <begin position="284"/>
        <end position="285"/>
    </location>
</feature>
<feature type="transmembrane region" description="Helical" evidence="1">
    <location>
        <begin position="286"/>
        <end position="306"/>
    </location>
</feature>
<feature type="topological domain" description="Periplasmic" evidence="1">
    <location>
        <begin position="307"/>
        <end position="341"/>
    </location>
</feature>
<feature type="transmembrane region" description="Helical" evidence="1">
    <location>
        <begin position="342"/>
        <end position="362"/>
    </location>
</feature>
<feature type="topological domain" description="Cytoplasmic" evidence="1">
    <location>
        <begin position="363"/>
        <end position="395"/>
    </location>
</feature>
<feature type="transmembrane region" description="Helical" evidence="1">
    <location>
        <begin position="396"/>
        <end position="416"/>
    </location>
</feature>
<feature type="topological domain" description="Periplasmic" evidence="1">
    <location>
        <begin position="417"/>
        <end position="430"/>
    </location>
</feature>
<feature type="transmembrane region" description="Helical" evidence="1">
    <location>
        <begin position="431"/>
        <end position="451"/>
    </location>
</feature>
<feature type="topological domain" description="Cytoplasmic" evidence="1">
    <location>
        <begin position="452"/>
        <end position="471"/>
    </location>
</feature>
<organism>
    <name type="scientific">Shigella sonnei (strain Ss046)</name>
    <dbReference type="NCBI Taxonomy" id="300269"/>
    <lineage>
        <taxon>Bacteria</taxon>
        <taxon>Pseudomonadati</taxon>
        <taxon>Pseudomonadota</taxon>
        <taxon>Gammaproteobacteria</taxon>
        <taxon>Enterobacterales</taxon>
        <taxon>Enterobacteriaceae</taxon>
        <taxon>Shigella</taxon>
    </lineage>
</organism>
<dbReference type="EMBL" id="CP000038">
    <property type="protein sequence ID" value="AAZ88785.1"/>
    <property type="molecule type" value="Genomic_DNA"/>
</dbReference>
<dbReference type="RefSeq" id="WP_000137839.1">
    <property type="nucleotide sequence ID" value="NC_007384.1"/>
</dbReference>
<dbReference type="SMR" id="Q3Z0C7"/>
<dbReference type="KEGG" id="ssn:SSON_2129"/>
<dbReference type="HOGENOM" id="CLU_000960_28_0_6"/>
<dbReference type="Proteomes" id="UP000002529">
    <property type="component" value="Chromosome"/>
</dbReference>
<dbReference type="GO" id="GO:0005886">
    <property type="term" value="C:plasma membrane"/>
    <property type="evidence" value="ECO:0007669"/>
    <property type="project" value="UniProtKB-SubCell"/>
</dbReference>
<dbReference type="GO" id="GO:0022857">
    <property type="term" value="F:transmembrane transporter activity"/>
    <property type="evidence" value="ECO:0007669"/>
    <property type="project" value="UniProtKB-UniRule"/>
</dbReference>
<dbReference type="CDD" id="cd17503">
    <property type="entry name" value="MFS_LmrB_MDR_like"/>
    <property type="match status" value="1"/>
</dbReference>
<dbReference type="FunFam" id="1.20.1250.20:FF:000021">
    <property type="entry name" value="Putative multidrug resistance protein MdtD"/>
    <property type="match status" value="1"/>
</dbReference>
<dbReference type="FunFam" id="1.20.1720.10:FF:000001">
    <property type="entry name" value="Putative multidrug resistance protein MdtD"/>
    <property type="match status" value="1"/>
</dbReference>
<dbReference type="Gene3D" id="1.20.1250.20">
    <property type="entry name" value="MFS general substrate transporter like domains"/>
    <property type="match status" value="1"/>
</dbReference>
<dbReference type="Gene3D" id="1.20.1720.10">
    <property type="entry name" value="Multidrug resistance protein D"/>
    <property type="match status" value="1"/>
</dbReference>
<dbReference type="HAMAP" id="MF_01577">
    <property type="entry name" value="MFS_MdtD"/>
    <property type="match status" value="1"/>
</dbReference>
<dbReference type="InterPro" id="IPR004638">
    <property type="entry name" value="EmrB-like"/>
</dbReference>
<dbReference type="InterPro" id="IPR011701">
    <property type="entry name" value="MFS"/>
</dbReference>
<dbReference type="InterPro" id="IPR020846">
    <property type="entry name" value="MFS_dom"/>
</dbReference>
<dbReference type="InterPro" id="IPR036259">
    <property type="entry name" value="MFS_trans_sf"/>
</dbReference>
<dbReference type="InterPro" id="IPR023721">
    <property type="entry name" value="Multi-R_MdtD"/>
</dbReference>
<dbReference type="NCBIfam" id="TIGR00711">
    <property type="entry name" value="efflux_EmrB"/>
    <property type="match status" value="1"/>
</dbReference>
<dbReference type="NCBIfam" id="NF007799">
    <property type="entry name" value="PRK10504.1"/>
    <property type="match status" value="1"/>
</dbReference>
<dbReference type="PANTHER" id="PTHR42718:SF46">
    <property type="entry name" value="BLR6921 PROTEIN"/>
    <property type="match status" value="1"/>
</dbReference>
<dbReference type="PANTHER" id="PTHR42718">
    <property type="entry name" value="MAJOR FACILITATOR SUPERFAMILY MULTIDRUG TRANSPORTER MFSC"/>
    <property type="match status" value="1"/>
</dbReference>
<dbReference type="Pfam" id="PF07690">
    <property type="entry name" value="MFS_1"/>
    <property type="match status" value="1"/>
</dbReference>
<dbReference type="PRINTS" id="PR01036">
    <property type="entry name" value="TCRTETB"/>
</dbReference>
<dbReference type="SUPFAM" id="SSF103473">
    <property type="entry name" value="MFS general substrate transporter"/>
    <property type="match status" value="1"/>
</dbReference>
<dbReference type="PROSITE" id="PS50850">
    <property type="entry name" value="MFS"/>
    <property type="match status" value="1"/>
</dbReference>
<comment type="subcellular location">
    <subcellularLocation>
        <location evidence="1">Cell inner membrane</location>
        <topology evidence="1">Multi-pass membrane protein</topology>
    </subcellularLocation>
</comment>
<comment type="similarity">
    <text evidence="1">Belongs to the major facilitator superfamily. TCR/Tet family.</text>
</comment>
<name>MDTD_SHISS</name>
<protein>
    <recommendedName>
        <fullName evidence="1">Putative multidrug resistance protein MdtD</fullName>
    </recommendedName>
</protein>
<accession>Q3Z0C7</accession>
<proteinExistence type="inferred from homology"/>
<reference key="1">
    <citation type="journal article" date="2005" name="Nucleic Acids Res.">
        <title>Genome dynamics and diversity of Shigella species, the etiologic agents of bacillary dysentery.</title>
        <authorList>
            <person name="Yang F."/>
            <person name="Yang J."/>
            <person name="Zhang X."/>
            <person name="Chen L."/>
            <person name="Jiang Y."/>
            <person name="Yan Y."/>
            <person name="Tang X."/>
            <person name="Wang J."/>
            <person name="Xiong Z."/>
            <person name="Dong J."/>
            <person name="Xue Y."/>
            <person name="Zhu Y."/>
            <person name="Xu X."/>
            <person name="Sun L."/>
            <person name="Chen S."/>
            <person name="Nie H."/>
            <person name="Peng J."/>
            <person name="Xu J."/>
            <person name="Wang Y."/>
            <person name="Yuan Z."/>
            <person name="Wen Y."/>
            <person name="Yao Z."/>
            <person name="Shen Y."/>
            <person name="Qiang B."/>
            <person name="Hou Y."/>
            <person name="Yu J."/>
            <person name="Jin Q."/>
        </authorList>
    </citation>
    <scope>NUCLEOTIDE SEQUENCE [LARGE SCALE GENOMIC DNA]</scope>
    <source>
        <strain>Ss046</strain>
    </source>
</reference>
<keyword id="KW-0997">Cell inner membrane</keyword>
<keyword id="KW-1003">Cell membrane</keyword>
<keyword id="KW-0472">Membrane</keyword>
<keyword id="KW-1185">Reference proteome</keyword>
<keyword id="KW-0812">Transmembrane</keyword>
<keyword id="KW-1133">Transmembrane helix</keyword>
<keyword id="KW-0813">Transport</keyword>
<sequence>MTELPDSTRWQLWIVAFGFFMQSLDTTIVNTALPSMAQSLGESPLHMHMVIVSYVLTVAVMLPASGWLADKVGVRNIFFTAIVLFTLGSLFCALSGTLNELLLARALQGVGGAMMVPVGRLTVMKIVPREQYMAAMTFVTLPGQVGPLLGPALGGLLVEYASWHWIFLINIPVGIIGAIATLLLMPNYTMQTRRFDLSGFLLLAVGMAVLTLALDGSKGTGLSPLAIAGLVAVGVVALVLYLLHARNNNRALFSLKLFRTRTFSLGLAGSFAGRIGSGMLPFMTPVFLQIGLGFSPFHAGLMMIPMVLGSMGMKRIVVQVVNRFGYRRVLVATTLGLSLITLLFMTTALLGWYYVLPFVLFLQGMVNSTRFSSMNTLTLKDLPDNLASSGNSLLSMIMQLSMSIGVTIAGLLLGLFGSQHVSVDSGTTQTVFMYTWLSMAFIIALPAFIFARVPNDTHQNVAISRRKRSAQ</sequence>
<gene>
    <name evidence="1" type="primary">mdtD</name>
    <name type="ordered locus">SSON_2129</name>
</gene>